<dbReference type="EC" id="3.6.4.-" evidence="1"/>
<dbReference type="EMBL" id="AP009240">
    <property type="protein sequence ID" value="BAG75583.1"/>
    <property type="molecule type" value="Genomic_DNA"/>
</dbReference>
<dbReference type="RefSeq" id="WP_001117011.1">
    <property type="nucleotide sequence ID" value="NC_011415.1"/>
</dbReference>
<dbReference type="SMR" id="B6HZ39"/>
<dbReference type="GeneID" id="75202125"/>
<dbReference type="KEGG" id="ecy:ECSE_0059"/>
<dbReference type="HOGENOM" id="CLU_011520_0_0_6"/>
<dbReference type="Proteomes" id="UP000008199">
    <property type="component" value="Chromosome"/>
</dbReference>
<dbReference type="GO" id="GO:0005524">
    <property type="term" value="F:ATP binding"/>
    <property type="evidence" value="ECO:0007669"/>
    <property type="project" value="UniProtKB-UniRule"/>
</dbReference>
<dbReference type="GO" id="GO:0003677">
    <property type="term" value="F:DNA binding"/>
    <property type="evidence" value="ECO:0007669"/>
    <property type="project" value="UniProtKB-KW"/>
</dbReference>
<dbReference type="GO" id="GO:0004386">
    <property type="term" value="F:helicase activity"/>
    <property type="evidence" value="ECO:0007669"/>
    <property type="project" value="UniProtKB-UniRule"/>
</dbReference>
<dbReference type="GO" id="GO:0016817">
    <property type="term" value="F:hydrolase activity, acting on acid anhydrides"/>
    <property type="evidence" value="ECO:0007669"/>
    <property type="project" value="InterPro"/>
</dbReference>
<dbReference type="GO" id="GO:0006355">
    <property type="term" value="P:regulation of DNA-templated transcription"/>
    <property type="evidence" value="ECO:0007669"/>
    <property type="project" value="UniProtKB-UniRule"/>
</dbReference>
<dbReference type="CDD" id="cd18011">
    <property type="entry name" value="DEXDc_RapA"/>
    <property type="match status" value="1"/>
</dbReference>
<dbReference type="CDD" id="cd18793">
    <property type="entry name" value="SF2_C_SNF"/>
    <property type="match status" value="1"/>
</dbReference>
<dbReference type="FunFam" id="2.30.30.140:FF:000020">
    <property type="entry name" value="RNA polymerase-associated protein RapA"/>
    <property type="match status" value="1"/>
</dbReference>
<dbReference type="FunFam" id="2.30.30.930:FF:000001">
    <property type="entry name" value="RNA polymerase-associated protein RapA"/>
    <property type="match status" value="1"/>
</dbReference>
<dbReference type="FunFam" id="3.30.360.80:FF:000001">
    <property type="entry name" value="RNA polymerase-associated protein RapA"/>
    <property type="match status" value="1"/>
</dbReference>
<dbReference type="FunFam" id="3.40.50.10810:FF:000012">
    <property type="entry name" value="RNA polymerase-associated protein RapA"/>
    <property type="match status" value="1"/>
</dbReference>
<dbReference type="FunFam" id="3.40.50.300:FF:000350">
    <property type="entry name" value="RNA polymerase-associated protein RapA"/>
    <property type="match status" value="1"/>
</dbReference>
<dbReference type="Gene3D" id="2.30.30.140">
    <property type="match status" value="1"/>
</dbReference>
<dbReference type="Gene3D" id="2.30.30.930">
    <property type="match status" value="1"/>
</dbReference>
<dbReference type="Gene3D" id="3.30.360.80">
    <property type="match status" value="1"/>
</dbReference>
<dbReference type="Gene3D" id="6.10.140.1500">
    <property type="match status" value="1"/>
</dbReference>
<dbReference type="Gene3D" id="6.10.140.2230">
    <property type="match status" value="1"/>
</dbReference>
<dbReference type="Gene3D" id="3.40.50.300">
    <property type="entry name" value="P-loop containing nucleotide triphosphate hydrolases"/>
    <property type="match status" value="1"/>
</dbReference>
<dbReference type="Gene3D" id="3.40.50.10810">
    <property type="entry name" value="Tandem AAA-ATPase domain"/>
    <property type="match status" value="1"/>
</dbReference>
<dbReference type="HAMAP" id="MF_01821">
    <property type="entry name" value="Helicase_RapA"/>
    <property type="match status" value="1"/>
</dbReference>
<dbReference type="InterPro" id="IPR014001">
    <property type="entry name" value="Helicase_ATP-bd"/>
</dbReference>
<dbReference type="InterPro" id="IPR001650">
    <property type="entry name" value="Helicase_C-like"/>
</dbReference>
<dbReference type="InterPro" id="IPR023949">
    <property type="entry name" value="Helicase_RapA"/>
</dbReference>
<dbReference type="InterPro" id="IPR027417">
    <property type="entry name" value="P-loop_NTPase"/>
</dbReference>
<dbReference type="InterPro" id="IPR022737">
    <property type="entry name" value="RapA_C"/>
</dbReference>
<dbReference type="InterPro" id="IPR038718">
    <property type="entry name" value="SNF2-like_sf"/>
</dbReference>
<dbReference type="InterPro" id="IPR049730">
    <property type="entry name" value="SNF2/RAD54-like_C"/>
</dbReference>
<dbReference type="InterPro" id="IPR000330">
    <property type="entry name" value="SNF2_N"/>
</dbReference>
<dbReference type="InterPro" id="IPR040765">
    <property type="entry name" value="Tudor_1_RapA"/>
</dbReference>
<dbReference type="InterPro" id="IPR040766">
    <property type="entry name" value="Tudor_2_RapA"/>
</dbReference>
<dbReference type="NCBIfam" id="NF003426">
    <property type="entry name" value="PRK04914.1"/>
    <property type="match status" value="1"/>
</dbReference>
<dbReference type="PANTHER" id="PTHR45766">
    <property type="entry name" value="DNA ANNEALING HELICASE AND ENDONUCLEASE ZRANB3 FAMILY MEMBER"/>
    <property type="match status" value="1"/>
</dbReference>
<dbReference type="PANTHER" id="PTHR45766:SF6">
    <property type="entry name" value="SWI_SNF-RELATED MATRIX-ASSOCIATED ACTIN-DEPENDENT REGULATOR OF CHROMATIN SUBFAMILY A-LIKE PROTEIN 1"/>
    <property type="match status" value="1"/>
</dbReference>
<dbReference type="Pfam" id="PF00271">
    <property type="entry name" value="Helicase_C"/>
    <property type="match status" value="1"/>
</dbReference>
<dbReference type="Pfam" id="PF12137">
    <property type="entry name" value="RapA_C"/>
    <property type="match status" value="1"/>
</dbReference>
<dbReference type="Pfam" id="PF00176">
    <property type="entry name" value="SNF2-rel_dom"/>
    <property type="match status" value="1"/>
</dbReference>
<dbReference type="Pfam" id="PF18339">
    <property type="entry name" value="Tudor_1_RapA"/>
    <property type="match status" value="1"/>
</dbReference>
<dbReference type="Pfam" id="PF18337">
    <property type="entry name" value="Tudor_RapA"/>
    <property type="match status" value="1"/>
</dbReference>
<dbReference type="SMART" id="SM00487">
    <property type="entry name" value="DEXDc"/>
    <property type="match status" value="1"/>
</dbReference>
<dbReference type="SMART" id="SM00490">
    <property type="entry name" value="HELICc"/>
    <property type="match status" value="1"/>
</dbReference>
<dbReference type="SUPFAM" id="SSF52540">
    <property type="entry name" value="P-loop containing nucleoside triphosphate hydrolases"/>
    <property type="match status" value="2"/>
</dbReference>
<dbReference type="PROSITE" id="PS51192">
    <property type="entry name" value="HELICASE_ATP_BIND_1"/>
    <property type="match status" value="1"/>
</dbReference>
<dbReference type="PROSITE" id="PS51194">
    <property type="entry name" value="HELICASE_CTER"/>
    <property type="match status" value="1"/>
</dbReference>
<sequence length="968" mass="109769">MPFTLGQRWISDTESELGLGTVVAVDARTVTLLFPSTGENRLYARSDSPVTRVMFNPGDTITSHDGWQMQVEEVKEENGLLTYIGTRLDTEESGVALREVFLDSKLVFSKPQDRLFAGQIDRMDRFALRYRARKYSSEQFRMPYSGLRGQRTSLIPHQLNIAHDVGRRHAPRVLLADEVGLGKTIEAGMILHQQLLSGAAERVLIIVPETLQHQWLVEMLRRFNLRFALFDDERYAEAQHDAYNPFDTEQLVICSLDFARRSKQRLEHLCEAEWDLLVVDEAHHLVWSEDAPSREYQAIEQLAEHVPGVLLLTATPEQLGMESHFARLRLLDPNRFHDFAQFVEEQKNYRPVADAVAMLLAGNKLSNDELNMLGEMIGEQDIEPLLQAANSDSEDAQSARQELVSMLMDRHGTSRVLFRNTRNGVKGFPKRELHTIKLPLPTQYQTAIKVSGIMGARKSAEDRARDMLYPERIYQEFEGDNATWWNFDPRVEWLMGYLTSHRSQKVLVICAKAATALQLEQVLREREGIRAAVFHEGMSIIERDRAAAWFAEEDTGAQVLLCSEIGSEGRNFQFASHMVMFDLPFNPDLLEQRIGRLDRIGQAHDIQIHVPYLEKTAQSVLVRWYHEGLDAFEHTCPTGRTIYDSVYNDLINYLASPDQTEGFDDLIKNCREQHEALKAQLEQGRDRLLEIHSNGGEKAQALAESIEEQDDDTNLIAFAMNLFDIIGINQDDRGDNMIVLTPSDHMLVPDFPGLSEDGITITFDREVALAREDAQFITWEHPLIRNGLDLILSGDTGSSTISLLKNKALPVGTLLVELIYVVEAQAPKQLQLNRFLPPTPVRMLLDKNGNNLAAQVEFETFNRQLNAVNRHTGSKLVNAVQQDVHAILQLGEAQIEKSARALIDAARNEADEKLSAELSRLEALRAVNPNIRDDELTAIESNRQQVMESLDQAGWRLDALRLIVVTHQ</sequence>
<evidence type="ECO:0000255" key="1">
    <source>
        <dbReference type="HAMAP-Rule" id="MF_01821"/>
    </source>
</evidence>
<name>RAPA_ECOSE</name>
<accession>B6HZ39</accession>
<feature type="chain" id="PRO_1000188175" description="RNA polymerase-associated protein RapA">
    <location>
        <begin position="1"/>
        <end position="968"/>
    </location>
</feature>
<feature type="domain" description="Helicase ATP-binding" evidence="1">
    <location>
        <begin position="164"/>
        <end position="334"/>
    </location>
</feature>
<feature type="domain" description="Helicase C-terminal" evidence="1">
    <location>
        <begin position="490"/>
        <end position="662"/>
    </location>
</feature>
<feature type="short sequence motif" description="DEAH box">
    <location>
        <begin position="280"/>
        <end position="283"/>
    </location>
</feature>
<feature type="binding site" evidence="1">
    <location>
        <begin position="177"/>
        <end position="184"/>
    </location>
    <ligand>
        <name>ATP</name>
        <dbReference type="ChEBI" id="CHEBI:30616"/>
    </ligand>
</feature>
<protein>
    <recommendedName>
        <fullName evidence="1">RNA polymerase-associated protein RapA</fullName>
        <ecNumber evidence="1">3.6.4.-</ecNumber>
    </recommendedName>
    <alternativeName>
        <fullName evidence="1">ATP-dependent helicase HepA</fullName>
    </alternativeName>
</protein>
<keyword id="KW-0010">Activator</keyword>
<keyword id="KW-0067">ATP-binding</keyword>
<keyword id="KW-0238">DNA-binding</keyword>
<keyword id="KW-0347">Helicase</keyword>
<keyword id="KW-0378">Hydrolase</keyword>
<keyword id="KW-0547">Nucleotide-binding</keyword>
<keyword id="KW-0804">Transcription</keyword>
<keyword id="KW-0805">Transcription regulation</keyword>
<organism>
    <name type="scientific">Escherichia coli (strain SE11)</name>
    <dbReference type="NCBI Taxonomy" id="409438"/>
    <lineage>
        <taxon>Bacteria</taxon>
        <taxon>Pseudomonadati</taxon>
        <taxon>Pseudomonadota</taxon>
        <taxon>Gammaproteobacteria</taxon>
        <taxon>Enterobacterales</taxon>
        <taxon>Enterobacteriaceae</taxon>
        <taxon>Escherichia</taxon>
    </lineage>
</organism>
<gene>
    <name evidence="1" type="primary">rapA</name>
    <name type="ordered locus">ECSE_0059</name>
</gene>
<proteinExistence type="inferred from homology"/>
<reference key="1">
    <citation type="journal article" date="2008" name="DNA Res.">
        <title>Complete genome sequence and comparative analysis of the wild-type commensal Escherichia coli strain SE11 isolated from a healthy adult.</title>
        <authorList>
            <person name="Oshima K."/>
            <person name="Toh H."/>
            <person name="Ogura Y."/>
            <person name="Sasamoto H."/>
            <person name="Morita H."/>
            <person name="Park S.-H."/>
            <person name="Ooka T."/>
            <person name="Iyoda S."/>
            <person name="Taylor T.D."/>
            <person name="Hayashi T."/>
            <person name="Itoh K."/>
            <person name="Hattori M."/>
        </authorList>
    </citation>
    <scope>NUCLEOTIDE SEQUENCE [LARGE SCALE GENOMIC DNA]</scope>
    <source>
        <strain>SE11</strain>
    </source>
</reference>
<comment type="function">
    <text evidence="1">Transcription regulator that activates transcription by stimulating RNA polymerase (RNAP) recycling in case of stress conditions such as supercoiled DNA or high salt concentrations. Probably acts by releasing the RNAP, when it is trapped or immobilized on tightly supercoiled DNA. Does not activate transcription on linear DNA. Probably not involved in DNA repair.</text>
</comment>
<comment type="subunit">
    <text evidence="1">Interacts with the RNAP. Has a higher affinity for the core RNAP than for the holoenzyme. Its ATPase activity is stimulated by binding to RNAP.</text>
</comment>
<comment type="similarity">
    <text evidence="1">Belongs to the SNF2/RAD54 helicase family. RapA subfamily.</text>
</comment>